<name>ABHGB_MOUSE</name>
<accession>Q80YU0</accession>
<dbReference type="EC" id="3.1.1.111" evidence="2"/>
<dbReference type="EMBL" id="BC050777">
    <property type="protein sequence ID" value="AAH50777.1"/>
    <property type="molecule type" value="mRNA"/>
</dbReference>
<dbReference type="CCDS" id="CCDS17213.1"/>
<dbReference type="RefSeq" id="NP_899004.1">
    <property type="nucleotide sequence ID" value="NM_183181.2"/>
</dbReference>
<dbReference type="SMR" id="Q80YU0"/>
<dbReference type="FunCoup" id="Q80YU0">
    <property type="interactions" value="382"/>
</dbReference>
<dbReference type="STRING" id="10090.ENSMUSP00000066520"/>
<dbReference type="ESTHER" id="mouse-Abhd16b">
    <property type="family name" value="ABHD16"/>
</dbReference>
<dbReference type="MEROPS" id="S09.976"/>
<dbReference type="PhosphoSitePlus" id="Q80YU0"/>
<dbReference type="PaxDb" id="10090-ENSMUSP00000066520"/>
<dbReference type="PeptideAtlas" id="Q80YU0"/>
<dbReference type="ProteomicsDB" id="285628"/>
<dbReference type="Antibodypedia" id="70808">
    <property type="antibodies" value="9 antibodies from 7 providers"/>
</dbReference>
<dbReference type="DNASU" id="241850"/>
<dbReference type="Ensembl" id="ENSMUST00000069649.9">
    <property type="protein sequence ID" value="ENSMUSP00000066520.9"/>
    <property type="gene ID" value="ENSMUSG00000055882.9"/>
</dbReference>
<dbReference type="GeneID" id="241850"/>
<dbReference type="KEGG" id="mmu:241850"/>
<dbReference type="UCSC" id="uc008omj.2">
    <property type="organism name" value="mouse"/>
</dbReference>
<dbReference type="AGR" id="MGI:3607711"/>
<dbReference type="CTD" id="140701"/>
<dbReference type="MGI" id="MGI:3607711">
    <property type="gene designation" value="Abhd16b"/>
</dbReference>
<dbReference type="VEuPathDB" id="HostDB:ENSMUSG00000055882"/>
<dbReference type="eggNOG" id="KOG1553">
    <property type="taxonomic scope" value="Eukaryota"/>
</dbReference>
<dbReference type="GeneTree" id="ENSGT00940000162803"/>
<dbReference type="HOGENOM" id="CLU_040705_2_0_1"/>
<dbReference type="InParanoid" id="Q80YU0"/>
<dbReference type="OMA" id="GHRALTC"/>
<dbReference type="OrthoDB" id="6412627at2759"/>
<dbReference type="PhylomeDB" id="Q80YU0"/>
<dbReference type="TreeFam" id="TF314267"/>
<dbReference type="BioGRID-ORCS" id="241850">
    <property type="hits" value="2 hits in 77 CRISPR screens"/>
</dbReference>
<dbReference type="PRO" id="PR:Q80YU0"/>
<dbReference type="Proteomes" id="UP000000589">
    <property type="component" value="Chromosome 2"/>
</dbReference>
<dbReference type="RNAct" id="Q80YU0">
    <property type="molecule type" value="protein"/>
</dbReference>
<dbReference type="Bgee" id="ENSMUSG00000055882">
    <property type="expression patterns" value="Expressed in testis and 12 other cell types or tissues"/>
</dbReference>
<dbReference type="GO" id="GO:0005654">
    <property type="term" value="C:nucleoplasm"/>
    <property type="evidence" value="ECO:0007669"/>
    <property type="project" value="Ensembl"/>
</dbReference>
<dbReference type="GO" id="GO:0016787">
    <property type="term" value="F:hydrolase activity"/>
    <property type="evidence" value="ECO:0007669"/>
    <property type="project" value="UniProtKB-KW"/>
</dbReference>
<dbReference type="GO" id="GO:0006629">
    <property type="term" value="P:lipid metabolic process"/>
    <property type="evidence" value="ECO:0007669"/>
    <property type="project" value="UniProtKB-KW"/>
</dbReference>
<dbReference type="FunFam" id="3.40.50.1820:FF:000074">
    <property type="entry name" value="Abhydrolase domain containing 16A"/>
    <property type="match status" value="1"/>
</dbReference>
<dbReference type="Gene3D" id="3.40.50.1820">
    <property type="entry name" value="alpha/beta hydrolase"/>
    <property type="match status" value="1"/>
</dbReference>
<dbReference type="InterPro" id="IPR000073">
    <property type="entry name" value="AB_hydrolase_1"/>
</dbReference>
<dbReference type="InterPro" id="IPR029058">
    <property type="entry name" value="AB_hydrolase_fold"/>
</dbReference>
<dbReference type="PANTHER" id="PTHR12277">
    <property type="entry name" value="ALPHA/BETA HYDROLASE DOMAIN-CONTAINING PROTEIN"/>
    <property type="match status" value="1"/>
</dbReference>
<dbReference type="PANTHER" id="PTHR12277:SF37">
    <property type="entry name" value="PROTEIN ABHD16B"/>
    <property type="match status" value="1"/>
</dbReference>
<dbReference type="Pfam" id="PF00561">
    <property type="entry name" value="Abhydrolase_1"/>
    <property type="match status" value="1"/>
</dbReference>
<dbReference type="SUPFAM" id="SSF53474">
    <property type="entry name" value="alpha/beta-Hydrolases"/>
    <property type="match status" value="1"/>
</dbReference>
<comment type="function">
    <text evidence="2">Hydrolyzes the sn-1 position of glycerophospholipids with high specificity towards phosphatidylserine (PS), PS-PLA1 enzyme. Also hydrolyzes the acyl chain of glycerolipids with a preference for the monoacylglycerol (MAG) 1-acylglycerol, MAG lipase. Plays a regulatory role in cellular lipid homeostasis by modulating genes involved in neutral lipid degradation and in phospholipid synthesis and composition.</text>
</comment>
<comment type="catalytic activity">
    <reaction evidence="2">
        <text>a 1,2-diacyl-sn-glycero-3-phospho-L-serine + H2O = a 2-acyl-sn-glycero-3-phospho-L-serine + a fatty acid + H(+)</text>
        <dbReference type="Rhea" id="RHEA:42212"/>
        <dbReference type="ChEBI" id="CHEBI:15377"/>
        <dbReference type="ChEBI" id="CHEBI:15378"/>
        <dbReference type="ChEBI" id="CHEBI:28868"/>
        <dbReference type="ChEBI" id="CHEBI:57262"/>
        <dbReference type="ChEBI" id="CHEBI:65214"/>
        <dbReference type="EC" id="3.1.1.111"/>
    </reaction>
    <physiologicalReaction direction="left-to-right" evidence="2">
        <dbReference type="Rhea" id="RHEA:42213"/>
    </physiologicalReaction>
</comment>
<comment type="catalytic activity">
    <reaction evidence="2">
        <text>a 1-acylglycerol + H2O = glycerol + a fatty acid + H(+)</text>
        <dbReference type="Rhea" id="RHEA:34019"/>
        <dbReference type="ChEBI" id="CHEBI:15377"/>
        <dbReference type="ChEBI" id="CHEBI:15378"/>
        <dbReference type="ChEBI" id="CHEBI:17754"/>
        <dbReference type="ChEBI" id="CHEBI:28868"/>
        <dbReference type="ChEBI" id="CHEBI:35759"/>
    </reaction>
    <physiologicalReaction direction="left-to-right" evidence="2">
        <dbReference type="Rhea" id="RHEA:34020"/>
    </physiologicalReaction>
</comment>
<comment type="catalytic activity">
    <reaction evidence="2">
        <text>1-(9Z-octadecenoyl)-glycerol + H2O = glycerol + (9Z)-octadecenoate + H(+)</text>
        <dbReference type="Rhea" id="RHEA:38487"/>
        <dbReference type="ChEBI" id="CHEBI:15377"/>
        <dbReference type="ChEBI" id="CHEBI:15378"/>
        <dbReference type="ChEBI" id="CHEBI:17754"/>
        <dbReference type="ChEBI" id="CHEBI:30823"/>
        <dbReference type="ChEBI" id="CHEBI:75342"/>
    </reaction>
    <physiologicalReaction direction="left-to-right" evidence="2">
        <dbReference type="Rhea" id="RHEA:38488"/>
    </physiologicalReaction>
</comment>
<comment type="tissue specificity">
    <text evidence="4">Expressed in most tissues, with highest expression found in the testes, skeletal muscle, and brown adipose tissue.</text>
</comment>
<comment type="similarity">
    <text evidence="5">Belongs to the AB hydrolase superfamily. ABHD16 family.</text>
</comment>
<reference key="1">
    <citation type="journal article" date="2004" name="Genome Res.">
        <title>The status, quality, and expansion of the NIH full-length cDNA project: the Mammalian Gene Collection (MGC).</title>
        <authorList>
            <consortium name="The MGC Project Team"/>
        </authorList>
    </citation>
    <scope>NUCLEOTIDE SEQUENCE [LARGE SCALE MRNA]</scope>
    <source>
        <tissue>Testis</tissue>
    </source>
</reference>
<reference key="2">
    <citation type="journal article" date="2013" name="Biochim. Biophys. Acta">
        <title>Mammalian alpha beta hydrolase domain (ABHD) proteins: Lipid metabolizing enzymes at the interface of cell signaling and energy metabolism.</title>
        <authorList>
            <person name="Lord C.C."/>
            <person name="Thomas G."/>
            <person name="Brown J.M."/>
        </authorList>
    </citation>
    <scope>TISSUE SPECIFICITY</scope>
</reference>
<sequence>MCVICFVKALVHVFKIYLTANYSYNFRSWPVDFRWDDLHAPSTGNSSQRALTCAAAAAGVWLLHDAALGGDTLTRPPRGARSQVQCLLQQIRELPSQLASYALAHSLGRWLVYPGSMFLMTRALMPLLQQGQERLVDRYRGRRAKLVACDGNEIDTMFMDRRQHPGSHGRGLCLVICCEGNAGFYEMGCLSAPLEAGYSVLGWNHPGFGGSTGAPFPQHDANAMDVVVKYALHRLNFPPAHVVVYGWSIGGFTATWATMTYPELGALVLDATFDDLVPLALKVMPQSWKGLVVRTVREHFNLNVAEQLCCYPGPVLLLRRTQDDVVSTSNHIPSMPSCQVEGDVEGNRGNELLLRLLQHRYPSVMAREGRTVVTRWLRASNLAQETALYARYRVDDEWCLATLRSYRERCQKELDDAEAWGPHGLSFPWFVGQGLSARRRRQLALFLARRHLKNLEATHCSPLEPEDFQLPWRL</sequence>
<organism>
    <name type="scientific">Mus musculus</name>
    <name type="common">Mouse</name>
    <dbReference type="NCBI Taxonomy" id="10090"/>
    <lineage>
        <taxon>Eukaryota</taxon>
        <taxon>Metazoa</taxon>
        <taxon>Chordata</taxon>
        <taxon>Craniata</taxon>
        <taxon>Vertebrata</taxon>
        <taxon>Euteleostomi</taxon>
        <taxon>Mammalia</taxon>
        <taxon>Eutheria</taxon>
        <taxon>Euarchontoglires</taxon>
        <taxon>Glires</taxon>
        <taxon>Rodentia</taxon>
        <taxon>Myomorpha</taxon>
        <taxon>Muroidea</taxon>
        <taxon>Muridae</taxon>
        <taxon>Murinae</taxon>
        <taxon>Mus</taxon>
        <taxon>Mus</taxon>
    </lineage>
</organism>
<gene>
    <name evidence="6" type="primary">Abhd16b</name>
</gene>
<protein>
    <recommendedName>
        <fullName evidence="2">ABHD16B</fullName>
        <ecNumber evidence="2">3.1.1.111</ecNumber>
    </recommendedName>
    <alternativeName>
        <fullName evidence="5">Alpha/beta hydrolase domain-containing protein 16B</fullName>
        <shortName evidence="6">Abhydrolase domain-containing protein 16B</shortName>
    </alternativeName>
</protein>
<keyword id="KW-0378">Hydrolase</keyword>
<keyword id="KW-0443">Lipid metabolism</keyword>
<keyword id="KW-1208">Phospholipid metabolism</keyword>
<keyword id="KW-1185">Reference proteome</keyword>
<evidence type="ECO:0000250" key="1"/>
<evidence type="ECO:0000250" key="2">
    <source>
        <dbReference type="UniProtKB" id="Q9H3Z7"/>
    </source>
</evidence>
<evidence type="ECO:0000255" key="3"/>
<evidence type="ECO:0000269" key="4">
    <source>
    </source>
</evidence>
<evidence type="ECO:0000305" key="5"/>
<evidence type="ECO:0000312" key="6">
    <source>
        <dbReference type="MGI" id="MGI:3607711"/>
    </source>
</evidence>
<proteinExistence type="evidence at transcript level"/>
<feature type="chain" id="PRO_0000079464" description="ABHD16B">
    <location>
        <begin position="1"/>
        <end position="474"/>
    </location>
</feature>
<feature type="domain" description="AB hydrolase-1" evidence="3">
    <location>
        <begin position="175"/>
        <end position="295"/>
    </location>
</feature>
<feature type="active site" description="Charge relay system" evidence="1">
    <location>
        <position position="248"/>
    </location>
</feature>
<feature type="active site" description="Charge relay system" evidence="1">
    <location>
        <position position="323"/>
    </location>
</feature>
<feature type="active site" description="Charge relay system" evidence="1">
    <location>
        <position position="423"/>
    </location>
</feature>